<dbReference type="EMBL" id="X64346">
    <property type="protein sequence ID" value="CAA45675.1"/>
    <property type="molecule type" value="Genomic_DNA"/>
</dbReference>
<dbReference type="EMBL" id="M86409">
    <property type="protein sequence ID" value="AAA46129.1"/>
    <property type="molecule type" value="Genomic_DNA"/>
</dbReference>
<dbReference type="RefSeq" id="NP_040254.1">
    <property type="nucleotide sequence ID" value="NC_001350.1"/>
</dbReference>
<dbReference type="SMR" id="Q01050"/>
<dbReference type="KEGG" id="vg:1682459"/>
<dbReference type="Proteomes" id="UP000000587">
    <property type="component" value="Segment"/>
</dbReference>
<dbReference type="Gene3D" id="1.10.3390.10">
    <property type="entry name" value="YejL-like"/>
    <property type="match status" value="1"/>
</dbReference>
<dbReference type="InterPro" id="IPR008642">
    <property type="entry name" value="Herpes_BLRF2"/>
</dbReference>
<dbReference type="Pfam" id="PF05812">
    <property type="entry name" value="Herpes_BLRF2"/>
    <property type="match status" value="1"/>
</dbReference>
<dbReference type="SUPFAM" id="SSF160459">
    <property type="entry name" value="BLRF2-like"/>
    <property type="match status" value="1"/>
</dbReference>
<comment type="similarity">
    <text evidence="1">Belongs to the herpesviridae BLRF2 family.</text>
</comment>
<gene>
    <name type="primary">52</name>
    <name type="synonym">EDLF3</name>
</gene>
<keyword id="KW-1185">Reference proteome</keyword>
<organism>
    <name type="scientific">Saimiriine herpesvirus 2 (strain 11)</name>
    <name type="common">SaHV-2</name>
    <name type="synonym">Herpesvirus saimiri</name>
    <dbReference type="NCBI Taxonomy" id="10383"/>
    <lineage>
        <taxon>Viruses</taxon>
        <taxon>Duplodnaviria</taxon>
        <taxon>Heunggongvirae</taxon>
        <taxon>Peploviricota</taxon>
        <taxon>Herviviricetes</taxon>
        <taxon>Herpesvirales</taxon>
        <taxon>Orthoherpesviridae</taxon>
        <taxon>Gammaherpesvirinae</taxon>
        <taxon>Rhadinovirus</taxon>
        <taxon>Rhadinovirus saimiriinegamma2</taxon>
        <taxon>Saimiriine herpesvirus 2</taxon>
    </lineage>
</organism>
<proteinExistence type="inferred from homology"/>
<reference key="1">
    <citation type="journal article" date="1992" name="J. Virol.">
        <title>Primary structure of the herpesvirus saimiri genome.</title>
        <authorList>
            <person name="Albrecht J.-C."/>
            <person name="Nicholas J."/>
            <person name="Biller D."/>
            <person name="Cameron K.R."/>
            <person name="Biesinger B."/>
            <person name="Newman C."/>
            <person name="Wittmann S."/>
            <person name="Craxton M.A."/>
            <person name="Coleman H."/>
            <person name="Fleckenstein B."/>
            <person name="Honess R.W."/>
        </authorList>
    </citation>
    <scope>NUCLEOTIDE SEQUENCE [LARGE SCALE GENOMIC DNA]</scope>
</reference>
<reference key="2">
    <citation type="journal article" date="1992" name="Virology">
        <title>Analysis of nucleotide sequence of the rightmost 43 kbp of herpesvirus saimiri (HVS) L-DNA: general conservation of genetic organization between HVS and Epstein-Barr virus.</title>
        <authorList>
            <person name="Nicholas J."/>
            <person name="Cameron K.R."/>
            <person name="Coleman H."/>
            <person name="Newman C."/>
            <person name="Honess R.W."/>
        </authorList>
    </citation>
    <scope>NUCLEOTIDE SEQUENCE [GENOMIC DNA]</scope>
</reference>
<protein>
    <recommendedName>
        <fullName>Uncharacterized gene 52 protein</fullName>
    </recommendedName>
</protein>
<feature type="chain" id="PRO_0000116257" description="Uncharacterized gene 52 protein">
    <location>
        <begin position="1"/>
        <end position="115"/>
    </location>
</feature>
<organismHost>
    <name type="scientific">Saimiri sciureus</name>
    <name type="common">Common squirrel monkey</name>
    <dbReference type="NCBI Taxonomy" id="9521"/>
</organismHost>
<name>VG52_SHV21</name>
<accession>Q01050</accession>
<sequence length="115" mass="13224">MASRRSCADVEELEKELQKLKIENKALKKKLVQHTSPEDELLTPAQKDAIINSTVNKLTKKAEEKIRERVLKDVLPLVSKNQCMEAIAHIKYRIDVSIDETYNLSRRPASKPRTK</sequence>
<evidence type="ECO:0000305" key="1"/>